<sequence length="126" mass="13993">MAILGLGTDIVEISRIEAVVERTGERLARRILSPSEWQHYQQHQQPVRFLAKRFAVKEAAAKAFGTGIRNGLAFNQFEVVNDALGKPTLRLHSRAAELAVELGVKSLHVTLADERRYACATVIIES</sequence>
<gene>
    <name evidence="1" type="primary">acpS</name>
    <name type="ordered locus">YPTB2886</name>
</gene>
<organism>
    <name type="scientific">Yersinia pseudotuberculosis serotype I (strain IP32953)</name>
    <dbReference type="NCBI Taxonomy" id="273123"/>
    <lineage>
        <taxon>Bacteria</taxon>
        <taxon>Pseudomonadati</taxon>
        <taxon>Pseudomonadota</taxon>
        <taxon>Gammaproteobacteria</taxon>
        <taxon>Enterobacterales</taxon>
        <taxon>Yersiniaceae</taxon>
        <taxon>Yersinia</taxon>
    </lineage>
</organism>
<name>ACPS_YERPS</name>
<feature type="chain" id="PRO_0000175734" description="Holo-[acyl-carrier-protein] synthase">
    <location>
        <begin position="1"/>
        <end position="126"/>
    </location>
</feature>
<feature type="binding site" evidence="1">
    <location>
        <position position="9"/>
    </location>
    <ligand>
        <name>Mg(2+)</name>
        <dbReference type="ChEBI" id="CHEBI:18420"/>
    </ligand>
</feature>
<feature type="binding site" evidence="1">
    <location>
        <position position="58"/>
    </location>
    <ligand>
        <name>Mg(2+)</name>
        <dbReference type="ChEBI" id="CHEBI:18420"/>
    </ligand>
</feature>
<evidence type="ECO:0000255" key="1">
    <source>
        <dbReference type="HAMAP-Rule" id="MF_00101"/>
    </source>
</evidence>
<comment type="function">
    <text evidence="1">Transfers the 4'-phosphopantetheine moiety from coenzyme A to a Ser of acyl-carrier-protein.</text>
</comment>
<comment type="catalytic activity">
    <reaction evidence="1">
        <text>apo-[ACP] + CoA = holo-[ACP] + adenosine 3',5'-bisphosphate + H(+)</text>
        <dbReference type="Rhea" id="RHEA:12068"/>
        <dbReference type="Rhea" id="RHEA-COMP:9685"/>
        <dbReference type="Rhea" id="RHEA-COMP:9690"/>
        <dbReference type="ChEBI" id="CHEBI:15378"/>
        <dbReference type="ChEBI" id="CHEBI:29999"/>
        <dbReference type="ChEBI" id="CHEBI:57287"/>
        <dbReference type="ChEBI" id="CHEBI:58343"/>
        <dbReference type="ChEBI" id="CHEBI:64479"/>
        <dbReference type="EC" id="2.7.8.7"/>
    </reaction>
</comment>
<comment type="cofactor">
    <cofactor evidence="1">
        <name>Mg(2+)</name>
        <dbReference type="ChEBI" id="CHEBI:18420"/>
    </cofactor>
</comment>
<comment type="subcellular location">
    <subcellularLocation>
        <location evidence="1">Cytoplasm</location>
    </subcellularLocation>
</comment>
<comment type="similarity">
    <text evidence="1">Belongs to the P-Pant transferase superfamily. AcpS family.</text>
</comment>
<dbReference type="EC" id="2.7.8.7" evidence="1"/>
<dbReference type="EMBL" id="BX936398">
    <property type="protein sequence ID" value="CAH22124.1"/>
    <property type="molecule type" value="Genomic_DNA"/>
</dbReference>
<dbReference type="RefSeq" id="WP_011192825.1">
    <property type="nucleotide sequence ID" value="NC_006155.1"/>
</dbReference>
<dbReference type="SMR" id="Q667V4"/>
<dbReference type="GeneID" id="49785104"/>
<dbReference type="KEGG" id="ypo:BZ17_3745"/>
<dbReference type="KEGG" id="yps:YPTB2886"/>
<dbReference type="PATRIC" id="fig|273123.14.peg.3927"/>
<dbReference type="Proteomes" id="UP000001011">
    <property type="component" value="Chromosome"/>
</dbReference>
<dbReference type="GO" id="GO:0005737">
    <property type="term" value="C:cytoplasm"/>
    <property type="evidence" value="ECO:0007669"/>
    <property type="project" value="UniProtKB-SubCell"/>
</dbReference>
<dbReference type="GO" id="GO:0008897">
    <property type="term" value="F:holo-[acyl-carrier-protein] synthase activity"/>
    <property type="evidence" value="ECO:0007669"/>
    <property type="project" value="UniProtKB-UniRule"/>
</dbReference>
<dbReference type="GO" id="GO:0000287">
    <property type="term" value="F:magnesium ion binding"/>
    <property type="evidence" value="ECO:0007669"/>
    <property type="project" value="UniProtKB-UniRule"/>
</dbReference>
<dbReference type="GO" id="GO:0006633">
    <property type="term" value="P:fatty acid biosynthetic process"/>
    <property type="evidence" value="ECO:0007669"/>
    <property type="project" value="UniProtKB-UniRule"/>
</dbReference>
<dbReference type="FunFam" id="3.90.470.20:FF:000001">
    <property type="entry name" value="Holo-[acyl-carrier-protein] synthase"/>
    <property type="match status" value="1"/>
</dbReference>
<dbReference type="Gene3D" id="3.90.470.20">
    <property type="entry name" value="4'-phosphopantetheinyl transferase domain"/>
    <property type="match status" value="1"/>
</dbReference>
<dbReference type="HAMAP" id="MF_00101">
    <property type="entry name" value="AcpS"/>
    <property type="match status" value="1"/>
</dbReference>
<dbReference type="InterPro" id="IPR008278">
    <property type="entry name" value="4-PPantetheinyl_Trfase_dom"/>
</dbReference>
<dbReference type="InterPro" id="IPR037143">
    <property type="entry name" value="4-PPantetheinyl_Trfase_dom_sf"/>
</dbReference>
<dbReference type="InterPro" id="IPR002582">
    <property type="entry name" value="ACPS"/>
</dbReference>
<dbReference type="InterPro" id="IPR004568">
    <property type="entry name" value="Ppantetheine-prot_Trfase_dom"/>
</dbReference>
<dbReference type="NCBIfam" id="TIGR00516">
    <property type="entry name" value="acpS"/>
    <property type="match status" value="1"/>
</dbReference>
<dbReference type="NCBIfam" id="TIGR00556">
    <property type="entry name" value="pantethn_trn"/>
    <property type="match status" value="1"/>
</dbReference>
<dbReference type="Pfam" id="PF01648">
    <property type="entry name" value="ACPS"/>
    <property type="match status" value="1"/>
</dbReference>
<dbReference type="SUPFAM" id="SSF56214">
    <property type="entry name" value="4'-phosphopantetheinyl transferase"/>
    <property type="match status" value="1"/>
</dbReference>
<proteinExistence type="inferred from homology"/>
<accession>Q667V4</accession>
<keyword id="KW-0963">Cytoplasm</keyword>
<keyword id="KW-0275">Fatty acid biosynthesis</keyword>
<keyword id="KW-0276">Fatty acid metabolism</keyword>
<keyword id="KW-0444">Lipid biosynthesis</keyword>
<keyword id="KW-0443">Lipid metabolism</keyword>
<keyword id="KW-0460">Magnesium</keyword>
<keyword id="KW-0479">Metal-binding</keyword>
<keyword id="KW-0808">Transferase</keyword>
<reference key="1">
    <citation type="journal article" date="2004" name="Proc. Natl. Acad. Sci. U.S.A.">
        <title>Insights into the evolution of Yersinia pestis through whole-genome comparison with Yersinia pseudotuberculosis.</title>
        <authorList>
            <person name="Chain P.S.G."/>
            <person name="Carniel E."/>
            <person name="Larimer F.W."/>
            <person name="Lamerdin J."/>
            <person name="Stoutland P.O."/>
            <person name="Regala W.M."/>
            <person name="Georgescu A.M."/>
            <person name="Vergez L.M."/>
            <person name="Land M.L."/>
            <person name="Motin V.L."/>
            <person name="Brubaker R.R."/>
            <person name="Fowler J."/>
            <person name="Hinnebusch J."/>
            <person name="Marceau M."/>
            <person name="Medigue C."/>
            <person name="Simonet M."/>
            <person name="Chenal-Francisque V."/>
            <person name="Souza B."/>
            <person name="Dacheux D."/>
            <person name="Elliott J.M."/>
            <person name="Derbise A."/>
            <person name="Hauser L.J."/>
            <person name="Garcia E."/>
        </authorList>
    </citation>
    <scope>NUCLEOTIDE SEQUENCE [LARGE SCALE GENOMIC DNA]</scope>
    <source>
        <strain>IP32953</strain>
    </source>
</reference>
<protein>
    <recommendedName>
        <fullName evidence="1">Holo-[acyl-carrier-protein] synthase</fullName>
        <shortName evidence="1">Holo-ACP synthase</shortName>
        <ecNumber evidence="1">2.7.8.7</ecNumber>
    </recommendedName>
    <alternativeName>
        <fullName evidence="1">4'-phosphopantetheinyl transferase AcpS</fullName>
    </alternativeName>
</protein>